<dbReference type="PIR" id="JG0008">
    <property type="entry name" value="JG0008"/>
</dbReference>
<dbReference type="PDB" id="1HUS">
    <property type="method" value="X-ray"/>
    <property type="resolution" value="2.50 A"/>
    <property type="chains" value="A=2-156"/>
</dbReference>
<dbReference type="PDBsum" id="1HUS"/>
<dbReference type="SMR" id="P22744"/>
<dbReference type="EvolutionaryTrace" id="P22744"/>
<dbReference type="GO" id="GO:0015935">
    <property type="term" value="C:small ribosomal subunit"/>
    <property type="evidence" value="ECO:0007669"/>
    <property type="project" value="InterPro"/>
</dbReference>
<dbReference type="GO" id="GO:0019843">
    <property type="term" value="F:rRNA binding"/>
    <property type="evidence" value="ECO:0007669"/>
    <property type="project" value="UniProtKB-UniRule"/>
</dbReference>
<dbReference type="GO" id="GO:0003735">
    <property type="term" value="F:structural constituent of ribosome"/>
    <property type="evidence" value="ECO:0007669"/>
    <property type="project" value="InterPro"/>
</dbReference>
<dbReference type="GO" id="GO:0000049">
    <property type="term" value="F:tRNA binding"/>
    <property type="evidence" value="ECO:0007669"/>
    <property type="project" value="UniProtKB-UniRule"/>
</dbReference>
<dbReference type="GO" id="GO:0006412">
    <property type="term" value="P:translation"/>
    <property type="evidence" value="ECO:0007669"/>
    <property type="project" value="UniProtKB-UniRule"/>
</dbReference>
<dbReference type="CDD" id="cd14869">
    <property type="entry name" value="uS7_Bacteria"/>
    <property type="match status" value="1"/>
</dbReference>
<dbReference type="FunFam" id="1.10.455.10:FF:000001">
    <property type="entry name" value="30S ribosomal protein S7"/>
    <property type="match status" value="1"/>
</dbReference>
<dbReference type="Gene3D" id="1.10.455.10">
    <property type="entry name" value="Ribosomal protein S7 domain"/>
    <property type="match status" value="1"/>
</dbReference>
<dbReference type="HAMAP" id="MF_00480_B">
    <property type="entry name" value="Ribosomal_uS7_B"/>
    <property type="match status" value="1"/>
</dbReference>
<dbReference type="InterPro" id="IPR000235">
    <property type="entry name" value="Ribosomal_uS7"/>
</dbReference>
<dbReference type="InterPro" id="IPR005717">
    <property type="entry name" value="Ribosomal_uS7_bac/org-type"/>
</dbReference>
<dbReference type="InterPro" id="IPR020606">
    <property type="entry name" value="Ribosomal_uS7_CS"/>
</dbReference>
<dbReference type="InterPro" id="IPR023798">
    <property type="entry name" value="Ribosomal_uS7_dom"/>
</dbReference>
<dbReference type="InterPro" id="IPR036823">
    <property type="entry name" value="Ribosomal_uS7_dom_sf"/>
</dbReference>
<dbReference type="NCBIfam" id="TIGR01029">
    <property type="entry name" value="rpsG_bact"/>
    <property type="match status" value="1"/>
</dbReference>
<dbReference type="PANTHER" id="PTHR11205">
    <property type="entry name" value="RIBOSOMAL PROTEIN S7"/>
    <property type="match status" value="1"/>
</dbReference>
<dbReference type="Pfam" id="PF00177">
    <property type="entry name" value="Ribosomal_S7"/>
    <property type="match status" value="1"/>
</dbReference>
<dbReference type="PIRSF" id="PIRSF002122">
    <property type="entry name" value="RPS7p_RPS7a_RPS5e_RPS7o"/>
    <property type="match status" value="1"/>
</dbReference>
<dbReference type="SUPFAM" id="SSF47973">
    <property type="entry name" value="Ribosomal protein S7"/>
    <property type="match status" value="1"/>
</dbReference>
<dbReference type="PROSITE" id="PS00052">
    <property type="entry name" value="RIBOSOMAL_S7"/>
    <property type="match status" value="1"/>
</dbReference>
<feature type="initiator methionine" description="Removed" evidence="3 4 5">
    <location>
        <position position="1"/>
    </location>
</feature>
<feature type="chain" id="PRO_0000124218" description="Small ribosomal subunit protein uS7">
    <location>
        <begin position="2"/>
        <end position="156"/>
    </location>
</feature>
<feature type="mutagenesis site" description="No binding to 16S RRNA." evidence="2">
    <location>
        <begin position="2"/>
        <end position="11"/>
    </location>
</feature>
<feature type="sequence conflict" description="In Ref. 1; AA sequence." evidence="6" ref="1">
    <original>E</original>
    <variation>K</variation>
    <location>
        <position position="60"/>
    </location>
</feature>
<feature type="sequence conflict" description="In Ref. 1; AA sequence and 2; AA sequence." evidence="6" ref="1 2">
    <original>N</original>
    <variation>G</variation>
    <location>
        <position position="112"/>
    </location>
</feature>
<feature type="turn" evidence="7">
    <location>
        <begin position="16"/>
        <end position="18"/>
    </location>
</feature>
<feature type="helix" evidence="7">
    <location>
        <begin position="21"/>
        <end position="30"/>
    </location>
</feature>
<feature type="helix" evidence="7">
    <location>
        <begin position="36"/>
        <end position="54"/>
    </location>
</feature>
<feature type="helix" evidence="7">
    <location>
        <begin position="58"/>
        <end position="69"/>
    </location>
</feature>
<feature type="strand" evidence="7">
    <location>
        <begin position="72"/>
        <end position="76"/>
    </location>
</feature>
<feature type="strand" evidence="7">
    <location>
        <begin position="87"/>
        <end position="90"/>
    </location>
</feature>
<feature type="helix" evidence="7">
    <location>
        <begin position="93"/>
        <end position="110"/>
    </location>
</feature>
<feature type="strand" evidence="7">
    <location>
        <begin position="113"/>
        <end position="115"/>
    </location>
</feature>
<feature type="helix" evidence="7">
    <location>
        <begin position="116"/>
        <end position="128"/>
    </location>
</feature>
<feature type="helix" evidence="7">
    <location>
        <begin position="133"/>
        <end position="147"/>
    </location>
</feature>
<reference key="1">
    <citation type="journal article" date="1991" name="Agric. Biol. Chem.">
        <title>The nucleotide sequences of Bacillus stearothermophilus ribosomal protein S12 and S7 genes: comparison with the str operon of Escherichia coli.</title>
        <authorList>
            <person name="Kimura M."/>
        </authorList>
    </citation>
    <scope>NUCLEOTIDE SEQUENCE [GENOMIC DNA]</scope>
    <scope>PROTEIN SEQUENCE OF 2-10; 12-21; 30-41; 57-73; 80-92; 110-127 AND 139-155</scope>
    <source>
        <strain>ATCC 29609 / DSM 2027 / NCA 1503 / NCIMB 8924</strain>
    </source>
</reference>
<reference key="2">
    <citation type="journal article" date="1995" name="EMBO J.">
        <title>Protein-rRNA binding features and their structural and functional implications in ribosomes as determined by cross-linking studies.</title>
        <authorList>
            <person name="Urlaub H."/>
            <person name="Kruft V."/>
            <person name="Bischof O."/>
            <person name="Mueller E.-C."/>
            <person name="Wittmann-Liebold B."/>
        </authorList>
    </citation>
    <scope>PROTEIN SEQUENCE OF 2-21 AND 108-127</scope>
    <scope>CROSS-LINKING TO RRNA</scope>
    <source>
        <strain>799</strain>
    </source>
</reference>
<reference key="3">
    <citation type="journal article" date="1974" name="FEBS Lett.">
        <title>Procaryotic ribosomal proteins: N-terminal sequence homologies and structural correspondence of 30 S ribosomal proteins from Escherichia coli and Bacillus stearothermophilus.</title>
        <authorList>
            <person name="Yaguchi M."/>
            <person name="Matheson A.T."/>
            <person name="Visentin L.P."/>
        </authorList>
    </citation>
    <scope>PROTEIN SEQUENCE OF 2-16</scope>
    <source>
        <strain>DSM 13240 / CIP 106956 / 10</strain>
    </source>
</reference>
<reference key="4">
    <citation type="journal article" date="1999" name="Eur. J. Biochem.">
        <title>Role of the N-terminal region of ribosomal protein S7 in its interaction with 16S rRNA which binds to the concavity formed by the beta-ribbon arm and the alpha-helix.</title>
        <authorList>
            <person name="Miyamoto A."/>
            <person name="Usui M."/>
            <person name="Yamasaki N."/>
            <person name="Yamada N."/>
            <person name="Kuwano E."/>
            <person name="Tanaka I."/>
            <person name="Kimura M."/>
        </authorList>
    </citation>
    <scope>MUTAGENESIS</scope>
</reference>
<reference key="5">
    <citation type="journal article" date="1997" name="Structure">
        <title>Ribosomal protein S7: a new RNA-binding motif with structural similarities to a DNA architectural factor.</title>
        <authorList>
            <person name="Hosaka H."/>
            <person name="Nakagawa A."/>
            <person name="Tanaka I."/>
            <person name="Harada N."/>
            <person name="Sano K."/>
            <person name="Kimura M."/>
            <person name="Yao M."/>
            <person name="Wakatsuki S."/>
        </authorList>
    </citation>
    <scope>X-RAY CRYSTALLOGRAPHY (2.5 ANGSTROMS)</scope>
    <scope>SEQUENCE REVISION TO 60 AND 112</scope>
</reference>
<keyword id="KW-0002">3D-structure</keyword>
<keyword id="KW-0903">Direct protein sequencing</keyword>
<keyword id="KW-0687">Ribonucleoprotein</keyword>
<keyword id="KW-0689">Ribosomal protein</keyword>
<keyword id="KW-0694">RNA-binding</keyword>
<keyword id="KW-0699">rRNA-binding</keyword>
<keyword id="KW-0820">tRNA-binding</keyword>
<gene>
    <name type="primary">rpsG</name>
</gene>
<evidence type="ECO:0000250" key="1"/>
<evidence type="ECO:0000269" key="2">
    <source>
    </source>
</evidence>
<evidence type="ECO:0000269" key="3">
    <source>
    </source>
</evidence>
<evidence type="ECO:0000269" key="4">
    <source>
    </source>
</evidence>
<evidence type="ECO:0000269" key="5">
    <source>
    </source>
</evidence>
<evidence type="ECO:0000305" key="6"/>
<evidence type="ECO:0007829" key="7">
    <source>
        <dbReference type="PDB" id="1HUS"/>
    </source>
</evidence>
<accession>P22744</accession>
<sequence>MPRRGPVAKRDVLPDPIYNSKLVTRLINKIMIDGKKSKAQKILYTAFDIIRERTGKDPMEVFEQALKNVMPVLEVRARRVGGANYQVPVEVRPDRRVSLGLRWLVQYARLRNEKTMEERLANEIMDAANNTGAAVKKREDTHKMAEANKAFAHYRW</sequence>
<comment type="function">
    <text evidence="1">One of the primary rRNA binding proteins, it binds directly to 16S rRNA where it nucleates assembly of the head domain of the 30S subunit. Is located at the subunit interface close to the decoding center, probably blocks exit of the E-site tRNA (By similarity).</text>
</comment>
<comment type="subunit">
    <text evidence="1">Part of the 30S ribosomal subunit. Contacts proteins S9 and S11 (By similarity).</text>
</comment>
<comment type="similarity">
    <text evidence="6">Belongs to the universal ribosomal protein uS7 family.</text>
</comment>
<proteinExistence type="evidence at protein level"/>
<name>RS7_GEOSE</name>
<organism>
    <name type="scientific">Geobacillus stearothermophilus</name>
    <name type="common">Bacillus stearothermophilus</name>
    <dbReference type="NCBI Taxonomy" id="1422"/>
    <lineage>
        <taxon>Bacteria</taxon>
        <taxon>Bacillati</taxon>
        <taxon>Bacillota</taxon>
        <taxon>Bacilli</taxon>
        <taxon>Bacillales</taxon>
        <taxon>Anoxybacillaceae</taxon>
        <taxon>Geobacillus</taxon>
    </lineage>
</organism>
<protein>
    <recommendedName>
        <fullName evidence="6">Small ribosomal subunit protein uS7</fullName>
    </recommendedName>
    <alternativeName>
        <fullName>30S ribosomal protein S7</fullName>
        <shortName>BS7</shortName>
    </alternativeName>
</protein>